<proteinExistence type="evidence at protein level"/>
<name>ATI1_ARATH</name>
<sequence>MANNEEHPPRGNEWEVVSLTSSAYAAAPGPYNVESRDVRKYDAYYGAETSRDLYMSEHFVFPPSEHENLPIDESLFVAEQRKDGRDLMLEGQGLSDQFHYEAGNNQQSIYGESALGSSRHMESFGSESAVYEHGLVDAEGNLDLHSDGEGEKDVKKSTHNLPCEAWWKRRAISMYSRTREANAIWSLFFAAAVTGLVVLGQRWQQERWQVLQLKWQSSISSEKLGRVLEPLSRLKDVIVRSNPQASLVRSGSSSEV</sequence>
<organism>
    <name type="scientific">Arabidopsis thaliana</name>
    <name type="common">Mouse-ear cress</name>
    <dbReference type="NCBI Taxonomy" id="3702"/>
    <lineage>
        <taxon>Eukaryota</taxon>
        <taxon>Viridiplantae</taxon>
        <taxon>Streptophyta</taxon>
        <taxon>Embryophyta</taxon>
        <taxon>Tracheophyta</taxon>
        <taxon>Spermatophyta</taxon>
        <taxon>Magnoliopsida</taxon>
        <taxon>eudicotyledons</taxon>
        <taxon>Gunneridae</taxon>
        <taxon>Pentapetalae</taxon>
        <taxon>rosids</taxon>
        <taxon>malvids</taxon>
        <taxon>Brassicales</taxon>
        <taxon>Brassicaceae</taxon>
        <taxon>Camelineae</taxon>
        <taxon>Arabidopsis</taxon>
    </lineage>
</organism>
<dbReference type="EMBL" id="AC004665">
    <property type="protein sequence ID" value="AAM14974.1"/>
    <property type="molecule type" value="Genomic_DNA"/>
</dbReference>
<dbReference type="EMBL" id="AC005397">
    <property type="protein sequence ID" value="AAC62904.2"/>
    <property type="molecule type" value="Genomic_DNA"/>
</dbReference>
<dbReference type="EMBL" id="CP002685">
    <property type="protein sequence ID" value="AEC10626.1"/>
    <property type="molecule type" value="Genomic_DNA"/>
</dbReference>
<dbReference type="EMBL" id="AF370190">
    <property type="protein sequence ID" value="AAK44005.1"/>
    <property type="molecule type" value="mRNA"/>
</dbReference>
<dbReference type="EMBL" id="AY062947">
    <property type="protein sequence ID" value="AAL33779.1"/>
    <property type="molecule type" value="mRNA"/>
</dbReference>
<dbReference type="EMBL" id="AY085218">
    <property type="protein sequence ID" value="AAM62451.1"/>
    <property type="molecule type" value="mRNA"/>
</dbReference>
<dbReference type="PIR" id="T02449">
    <property type="entry name" value="T02449"/>
</dbReference>
<dbReference type="RefSeq" id="NP_566059.1">
    <property type="nucleotide sequence ID" value="NM_130161.3"/>
</dbReference>
<dbReference type="FunCoup" id="O82775">
    <property type="interactions" value="1034"/>
</dbReference>
<dbReference type="IntAct" id="O82775">
    <property type="interactions" value="7"/>
</dbReference>
<dbReference type="STRING" id="3702.O82775"/>
<dbReference type="iPTMnet" id="O82775"/>
<dbReference type="PaxDb" id="3702-AT2G45980.1"/>
<dbReference type="ProteomicsDB" id="246559"/>
<dbReference type="EnsemblPlants" id="AT2G45980.1">
    <property type="protein sequence ID" value="AT2G45980.1"/>
    <property type="gene ID" value="AT2G45980"/>
</dbReference>
<dbReference type="GeneID" id="819206"/>
<dbReference type="Gramene" id="AT2G45980.1">
    <property type="protein sequence ID" value="AT2G45980.1"/>
    <property type="gene ID" value="AT2G45980"/>
</dbReference>
<dbReference type="KEGG" id="ath:AT2G45980"/>
<dbReference type="Araport" id="AT2G45980"/>
<dbReference type="TAIR" id="AT2G45980">
    <property type="gene designation" value="ATI1"/>
</dbReference>
<dbReference type="eggNOG" id="KOG1347">
    <property type="taxonomic scope" value="Eukaryota"/>
</dbReference>
<dbReference type="HOGENOM" id="CLU_054659_0_0_1"/>
<dbReference type="InParanoid" id="O82775"/>
<dbReference type="OMA" id="THNLPCE"/>
<dbReference type="OrthoDB" id="604034at2759"/>
<dbReference type="PhylomeDB" id="O82775"/>
<dbReference type="PRO" id="PR:O82775"/>
<dbReference type="Proteomes" id="UP000006548">
    <property type="component" value="Chromosome 2"/>
</dbReference>
<dbReference type="ExpressionAtlas" id="O82775">
    <property type="expression patterns" value="baseline and differential"/>
</dbReference>
<dbReference type="GO" id="GO:0031969">
    <property type="term" value="C:chloroplast membrane"/>
    <property type="evidence" value="ECO:0007669"/>
    <property type="project" value="UniProtKB-SubCell"/>
</dbReference>
<dbReference type="GO" id="GO:0009570">
    <property type="term" value="C:chloroplast stroma"/>
    <property type="evidence" value="ECO:0000314"/>
    <property type="project" value="TAIR"/>
</dbReference>
<dbReference type="GO" id="GO:0005829">
    <property type="term" value="C:cytosol"/>
    <property type="evidence" value="ECO:0007669"/>
    <property type="project" value="GOC"/>
</dbReference>
<dbReference type="GO" id="GO:0005783">
    <property type="term" value="C:endoplasmic reticulum"/>
    <property type="evidence" value="ECO:0000314"/>
    <property type="project" value="TAIR"/>
</dbReference>
<dbReference type="GO" id="GO:0005789">
    <property type="term" value="C:endoplasmic reticulum membrane"/>
    <property type="evidence" value="ECO:0007669"/>
    <property type="project" value="UniProtKB-SubCell"/>
</dbReference>
<dbReference type="GO" id="GO:0043231">
    <property type="term" value="C:intracellular membrane-bounded organelle"/>
    <property type="evidence" value="ECO:0000314"/>
    <property type="project" value="TAIR"/>
</dbReference>
<dbReference type="GO" id="GO:1904962">
    <property type="term" value="P:plastid to vacuole vesicle-mediated transport"/>
    <property type="evidence" value="ECO:0000314"/>
    <property type="project" value="TAIR"/>
</dbReference>
<dbReference type="GO" id="GO:0071211">
    <property type="term" value="P:protein targeting to vacuole involved in autophagy"/>
    <property type="evidence" value="ECO:0000353"/>
    <property type="project" value="TAIR"/>
</dbReference>
<dbReference type="DisProt" id="DP02549"/>
<dbReference type="InterPro" id="IPR040304">
    <property type="entry name" value="ATG8-IP-1/2"/>
</dbReference>
<dbReference type="PANTHER" id="PTHR34797:SF11">
    <property type="entry name" value="ATG8-INTERACTING PROTEIN 1"/>
    <property type="match status" value="1"/>
</dbReference>
<dbReference type="PANTHER" id="PTHR34797">
    <property type="entry name" value="ATG8-INTERACTING PROTEIN 2"/>
    <property type="match status" value="1"/>
</dbReference>
<feature type="chain" id="PRO_0000434630" description="ATG8-interacting protein 1">
    <location>
        <begin position="1"/>
        <end position="256"/>
    </location>
</feature>
<feature type="transmembrane region" description="Helical" evidence="1">
    <location>
        <begin position="181"/>
        <end position="200"/>
    </location>
</feature>
<feature type="short sequence motif" description="AIM (Atg8-family-interacting motif)" evidence="7">
    <location>
        <begin position="14"/>
        <end position="17"/>
    </location>
</feature>
<feature type="short sequence motif" description="AIM (Atg8-family-interacting motif)" evidence="7">
    <location>
        <begin position="208"/>
        <end position="211"/>
    </location>
</feature>
<feature type="sequence conflict" description="In Ref. 4; AAM62451." evidence="6" ref="4">
    <original>E</original>
    <variation>Q</variation>
    <location>
        <position position="57"/>
    </location>
</feature>
<gene>
    <name evidence="5" type="primary">ATI1</name>
    <name evidence="8" type="ordered locus">At2g45980</name>
</gene>
<keyword id="KW-0072">Autophagy</keyword>
<keyword id="KW-0150">Chloroplast</keyword>
<keyword id="KW-0256">Endoplasmic reticulum</keyword>
<keyword id="KW-0472">Membrane</keyword>
<keyword id="KW-0934">Plastid</keyword>
<keyword id="KW-0653">Protein transport</keyword>
<keyword id="KW-1185">Reference proteome</keyword>
<keyword id="KW-0346">Stress response</keyword>
<keyword id="KW-0812">Transmembrane</keyword>
<keyword id="KW-1133">Transmembrane helix</keyword>
<keyword id="KW-0813">Transport</keyword>
<accession>O82775</accession>
<accession>Q8LEV1</accession>
<accession>Q94K87</accession>
<reference key="1">
    <citation type="journal article" date="1999" name="Nature">
        <title>Sequence and analysis of chromosome 2 of the plant Arabidopsis thaliana.</title>
        <authorList>
            <person name="Lin X."/>
            <person name="Kaul S."/>
            <person name="Rounsley S.D."/>
            <person name="Shea T.P."/>
            <person name="Benito M.-I."/>
            <person name="Town C.D."/>
            <person name="Fujii C.Y."/>
            <person name="Mason T.M."/>
            <person name="Bowman C.L."/>
            <person name="Barnstead M.E."/>
            <person name="Feldblyum T.V."/>
            <person name="Buell C.R."/>
            <person name="Ketchum K.A."/>
            <person name="Lee J.J."/>
            <person name="Ronning C.M."/>
            <person name="Koo H.L."/>
            <person name="Moffat K.S."/>
            <person name="Cronin L.A."/>
            <person name="Shen M."/>
            <person name="Pai G."/>
            <person name="Van Aken S."/>
            <person name="Umayam L."/>
            <person name="Tallon L.J."/>
            <person name="Gill J.E."/>
            <person name="Adams M.D."/>
            <person name="Carrera A.J."/>
            <person name="Creasy T.H."/>
            <person name="Goodman H.M."/>
            <person name="Somerville C.R."/>
            <person name="Copenhaver G.P."/>
            <person name="Preuss D."/>
            <person name="Nierman W.C."/>
            <person name="White O."/>
            <person name="Eisen J.A."/>
            <person name="Salzberg S.L."/>
            <person name="Fraser C.M."/>
            <person name="Venter J.C."/>
        </authorList>
    </citation>
    <scope>NUCLEOTIDE SEQUENCE [LARGE SCALE GENOMIC DNA]</scope>
    <source>
        <strain>cv. Columbia</strain>
    </source>
</reference>
<reference key="2">
    <citation type="journal article" date="2017" name="Plant J.">
        <title>Araport11: a complete reannotation of the Arabidopsis thaliana reference genome.</title>
        <authorList>
            <person name="Cheng C.Y."/>
            <person name="Krishnakumar V."/>
            <person name="Chan A.P."/>
            <person name="Thibaud-Nissen F."/>
            <person name="Schobel S."/>
            <person name="Town C.D."/>
        </authorList>
    </citation>
    <scope>GENOME REANNOTATION</scope>
    <source>
        <strain>cv. Columbia</strain>
    </source>
</reference>
<reference key="3">
    <citation type="journal article" date="2003" name="Science">
        <title>Empirical analysis of transcriptional activity in the Arabidopsis genome.</title>
        <authorList>
            <person name="Yamada K."/>
            <person name="Lim J."/>
            <person name="Dale J.M."/>
            <person name="Chen H."/>
            <person name="Shinn P."/>
            <person name="Palm C.J."/>
            <person name="Southwick A.M."/>
            <person name="Wu H.C."/>
            <person name="Kim C.J."/>
            <person name="Nguyen M."/>
            <person name="Pham P.K."/>
            <person name="Cheuk R.F."/>
            <person name="Karlin-Newmann G."/>
            <person name="Liu S.X."/>
            <person name="Lam B."/>
            <person name="Sakano H."/>
            <person name="Wu T."/>
            <person name="Yu G."/>
            <person name="Miranda M."/>
            <person name="Quach H.L."/>
            <person name="Tripp M."/>
            <person name="Chang C.H."/>
            <person name="Lee J.M."/>
            <person name="Toriumi M.J."/>
            <person name="Chan M.M."/>
            <person name="Tang C.C."/>
            <person name="Onodera C.S."/>
            <person name="Deng J.M."/>
            <person name="Akiyama K."/>
            <person name="Ansari Y."/>
            <person name="Arakawa T."/>
            <person name="Banh J."/>
            <person name="Banno F."/>
            <person name="Bowser L."/>
            <person name="Brooks S.Y."/>
            <person name="Carninci P."/>
            <person name="Chao Q."/>
            <person name="Choy N."/>
            <person name="Enju A."/>
            <person name="Goldsmith A.D."/>
            <person name="Gurjal M."/>
            <person name="Hansen N.F."/>
            <person name="Hayashizaki Y."/>
            <person name="Johnson-Hopson C."/>
            <person name="Hsuan V.W."/>
            <person name="Iida K."/>
            <person name="Karnes M."/>
            <person name="Khan S."/>
            <person name="Koesema E."/>
            <person name="Ishida J."/>
            <person name="Jiang P.X."/>
            <person name="Jones T."/>
            <person name="Kawai J."/>
            <person name="Kamiya A."/>
            <person name="Meyers C."/>
            <person name="Nakajima M."/>
            <person name="Narusaka M."/>
            <person name="Seki M."/>
            <person name="Sakurai T."/>
            <person name="Satou M."/>
            <person name="Tamse R."/>
            <person name="Vaysberg M."/>
            <person name="Wallender E.K."/>
            <person name="Wong C."/>
            <person name="Yamamura Y."/>
            <person name="Yuan S."/>
            <person name="Shinozaki K."/>
            <person name="Davis R.W."/>
            <person name="Theologis A."/>
            <person name="Ecker J.R."/>
        </authorList>
    </citation>
    <scope>NUCLEOTIDE SEQUENCE [LARGE SCALE MRNA]</scope>
    <source>
        <strain>cv. Columbia</strain>
    </source>
</reference>
<reference key="4">
    <citation type="submission" date="2002-03" db="EMBL/GenBank/DDBJ databases">
        <title>Full-length cDNA from Arabidopsis thaliana.</title>
        <authorList>
            <person name="Brover V.V."/>
            <person name="Troukhan M.E."/>
            <person name="Alexandrov N.A."/>
            <person name="Lu Y.-P."/>
            <person name="Flavell R.B."/>
            <person name="Feldmann K.A."/>
        </authorList>
    </citation>
    <scope>NUCLEOTIDE SEQUENCE [LARGE SCALE MRNA]</scope>
</reference>
<reference key="5">
    <citation type="journal article" date="2010" name="FEBS Lett.">
        <title>Atg8-family interacting motif crucial for selective autophagy.</title>
        <authorList>
            <person name="Noda N.N."/>
            <person name="Ohsumi Y."/>
            <person name="Inagaki F."/>
        </authorList>
    </citation>
    <scope>AIM MOTIF</scope>
</reference>
<reference key="6">
    <citation type="journal article" date="2012" name="Plant Cell">
        <title>A new type of compartment, defined by plant-specific Atg8-interacting proteins, is induced upon exposure of Arabidopsis plants to carbon starvation.</title>
        <authorList>
            <person name="Honig A."/>
            <person name="Avin-Wittenberg T."/>
            <person name="Ufaz S."/>
            <person name="Galili G."/>
        </authorList>
    </citation>
    <scope>FUNCTION</scope>
    <scope>INTERACTION WITH ATG8F</scope>
    <scope>SUBCELLULAR LOCATION</scope>
</reference>
<reference key="7">
    <citation type="journal article" date="2012" name="Plant Signal. Behav.">
        <title>ATI1, a newly identified atg8-interacting protein, binds two different Atg8 homologs.</title>
        <authorList>
            <person name="Avin-Wittenberg T."/>
            <person name="Michaeli S."/>
            <person name="Honig A."/>
            <person name="Galili G."/>
        </authorList>
    </citation>
    <scope>INTERACTION WITH ATG8F AND ATG8H</scope>
</reference>
<reference key="8">
    <citation type="journal article" date="2014" name="Plant Cell">
        <title>Arabidopsis ATG8-INTERACTING PROTEIN1 is involved in autophagy-dependent vesicular trafficking of plastid proteins to the vacuole.</title>
        <authorList>
            <person name="Michaeli S."/>
            <person name="Honig A."/>
            <person name="Levanony H."/>
            <person name="Peled-Zehavi H."/>
            <person name="Galili G."/>
        </authorList>
    </citation>
    <scope>FUNCTION</scope>
    <scope>INTERACTION WITH APE1 AND PSBS/NPQ4</scope>
    <scope>SUBCELLULAR LOCATION</scope>
    <scope>INDUCTION BY SALT STRESS</scope>
</reference>
<protein>
    <recommendedName>
        <fullName evidence="5">ATG8-interacting protein 1</fullName>
    </recommendedName>
</protein>
<comment type="function">
    <text evidence="2 4">Involved in a special stress-induced plastid-to-vacuole protein trafficking pathway. Interacts with ATG8F in plastid bodies to subsequently enable their delivery to the vacuole by an autophagic pathway. Interacts with the plastid proteins APE1 and PSBS/NPQ4 and may recruit them as cargo into plastid bodies that may be recognized by the autophagy machinery for degradation in the vacuole. Involved in the alleviation of damage caused by salt stress during plant development, probably through its involvement in plastid-to-vacuole and ER-to-vacuole trafficking (PubMed:25281689). Plays a role in seed germination in response to exogenous abscisic acid (ABA) treatment (PubMed:22253227).</text>
</comment>
<comment type="subunit">
    <text evidence="2 3 4">Interacts with ATG8F (PubMed:22253227, PubMed:22580699). Interacts with ATG8H (PubMed:22580699). Interacts with APE1 and PSBS/NPQ4 (PubMed:25281689).</text>
</comment>
<comment type="subcellular location">
    <subcellularLocation>
        <location evidence="2">Endoplasmic reticulum membrane</location>
        <topology evidence="1">Single-pass membrane protein</topology>
    </subcellularLocation>
    <subcellularLocation>
        <location evidence="1">Membrane</location>
        <topology evidence="1">Single-pass membrane protein</topology>
    </subcellularLocation>
    <subcellularLocation>
        <location evidence="4">Plastid</location>
        <location evidence="4">Chloroplast membrane</location>
    </subcellularLocation>
    <text evidence="2 4">Under favorable growth conditions, partially associated with the endoplasmic reticulum (ER) membrane network. Upon exposure to carbon starvation, mainly associated with newly identified spherical compartments that dynamically move along the ER network and reach the lytic vacuole (PubMed:22253227). Under carbon starvation, salt stress and during senescence, localized to novel plastid-associated bodies that are transported to vesicles. These plastid bodises are morphologically distinct from the ER-associated bodies (PubMed:25281689).</text>
</comment>
<comment type="induction">
    <text evidence="4">By salt stress.</text>
</comment>
<comment type="miscellaneous">
    <text evidence="2">Plants over-expressing ATI1 display increased ability of seed germination in presence of exogenous abscisic acid (ABA). Plants silencing ATI1 and ATI2 display decreased ability of seed germination in presence of exogenous ABA.</text>
</comment>
<evidence type="ECO:0000255" key="1"/>
<evidence type="ECO:0000269" key="2">
    <source>
    </source>
</evidence>
<evidence type="ECO:0000269" key="3">
    <source>
    </source>
</evidence>
<evidence type="ECO:0000269" key="4">
    <source>
    </source>
</evidence>
<evidence type="ECO:0000303" key="5">
    <source>
    </source>
</evidence>
<evidence type="ECO:0000305" key="6"/>
<evidence type="ECO:0000305" key="7">
    <source>
    </source>
</evidence>
<evidence type="ECO:0000312" key="8">
    <source>
        <dbReference type="Araport" id="AT2G45980"/>
    </source>
</evidence>